<name>TRMY_NATPD</name>
<accession>Q3IRJ0</accession>
<keyword id="KW-0963">Cytoplasm</keyword>
<keyword id="KW-0489">Methyltransferase</keyword>
<keyword id="KW-1185">Reference proteome</keyword>
<keyword id="KW-0949">S-adenosyl-L-methionine</keyword>
<keyword id="KW-0808">Transferase</keyword>
<keyword id="KW-0819">tRNA processing</keyword>
<evidence type="ECO:0000255" key="1">
    <source>
        <dbReference type="HAMAP-Rule" id="MF_00587"/>
    </source>
</evidence>
<feature type="chain" id="PRO_1000025473" description="tRNA (pseudouridine(54)-N(1))-methyltransferase">
    <location>
        <begin position="1"/>
        <end position="198"/>
    </location>
</feature>
<feature type="binding site" evidence="1">
    <location>
        <position position="128"/>
    </location>
    <ligand>
        <name>S-adenosyl-L-methionine</name>
        <dbReference type="ChEBI" id="CHEBI:59789"/>
    </ligand>
</feature>
<gene>
    <name evidence="1" type="primary">trmY</name>
    <name type="ordered locus">NP_2324A</name>
</gene>
<reference key="1">
    <citation type="journal article" date="2005" name="Genome Res.">
        <title>Living with two extremes: conclusions from the genome sequence of Natronomonas pharaonis.</title>
        <authorList>
            <person name="Falb M."/>
            <person name="Pfeiffer F."/>
            <person name="Palm P."/>
            <person name="Rodewald K."/>
            <person name="Hickmann V."/>
            <person name="Tittor J."/>
            <person name="Oesterhelt D."/>
        </authorList>
    </citation>
    <scope>NUCLEOTIDE SEQUENCE [LARGE SCALE GENOMIC DNA]</scope>
    <source>
        <strain>ATCC 35678 / DSM 2160 / CIP 103997 / JCM 8858 / NBRC 14720 / NCIMB 2260 / Gabara</strain>
    </source>
</reference>
<protein>
    <recommendedName>
        <fullName evidence="1">tRNA (pseudouridine(54)-N(1))-methyltransferase</fullName>
        <ecNumber evidence="1">2.1.1.257</ecNumber>
    </recommendedName>
</protein>
<proteinExistence type="inferred from homology"/>
<dbReference type="EC" id="2.1.1.257" evidence="1"/>
<dbReference type="EMBL" id="CR936257">
    <property type="protein sequence ID" value="CAI49253.1"/>
    <property type="molecule type" value="Genomic_DNA"/>
</dbReference>
<dbReference type="RefSeq" id="WP_011322880.1">
    <property type="nucleotide sequence ID" value="NC_007426.1"/>
</dbReference>
<dbReference type="SMR" id="Q3IRJ0"/>
<dbReference type="STRING" id="348780.NP_2324A"/>
<dbReference type="EnsemblBacteria" id="CAI49253">
    <property type="protein sequence ID" value="CAI49253"/>
    <property type="gene ID" value="NP_2324A"/>
</dbReference>
<dbReference type="GeneID" id="3701405"/>
<dbReference type="KEGG" id="nph:NP_2324A"/>
<dbReference type="eggNOG" id="arCOG01239">
    <property type="taxonomic scope" value="Archaea"/>
</dbReference>
<dbReference type="HOGENOM" id="CLU_107018_0_0_2"/>
<dbReference type="OrthoDB" id="27492at2157"/>
<dbReference type="Proteomes" id="UP000002698">
    <property type="component" value="Chromosome"/>
</dbReference>
<dbReference type="GO" id="GO:0005737">
    <property type="term" value="C:cytoplasm"/>
    <property type="evidence" value="ECO:0007669"/>
    <property type="project" value="UniProtKB-SubCell"/>
</dbReference>
<dbReference type="GO" id="GO:0008757">
    <property type="term" value="F:S-adenosylmethionine-dependent methyltransferase activity"/>
    <property type="evidence" value="ECO:0007669"/>
    <property type="project" value="UniProtKB-UniRule"/>
</dbReference>
<dbReference type="GO" id="GO:0008175">
    <property type="term" value="F:tRNA methyltransferase activity"/>
    <property type="evidence" value="ECO:0007669"/>
    <property type="project" value="UniProtKB-UniRule"/>
</dbReference>
<dbReference type="GO" id="GO:0030488">
    <property type="term" value="P:tRNA methylation"/>
    <property type="evidence" value="ECO:0007669"/>
    <property type="project" value="UniProtKB-UniRule"/>
</dbReference>
<dbReference type="CDD" id="cd18087">
    <property type="entry name" value="TrmY-like"/>
    <property type="match status" value="1"/>
</dbReference>
<dbReference type="Gene3D" id="3.40.1280.10">
    <property type="match status" value="1"/>
</dbReference>
<dbReference type="HAMAP" id="MF_00587">
    <property type="entry name" value="tRNA_methyltr_TrmY"/>
    <property type="match status" value="1"/>
</dbReference>
<dbReference type="InterPro" id="IPR029028">
    <property type="entry name" value="Alpha/beta_knot_MTases"/>
</dbReference>
<dbReference type="InterPro" id="IPR007158">
    <property type="entry name" value="TrmY"/>
</dbReference>
<dbReference type="InterPro" id="IPR029026">
    <property type="entry name" value="tRNA_m1G_MTases_N"/>
</dbReference>
<dbReference type="NCBIfam" id="NF002560">
    <property type="entry name" value="PRK02135.1"/>
    <property type="match status" value="1"/>
</dbReference>
<dbReference type="PANTHER" id="PTHR40703">
    <property type="entry name" value="TRNA (PSEUDOURIDINE(54)-N(1))-METHYLTRANSFERASE"/>
    <property type="match status" value="1"/>
</dbReference>
<dbReference type="PANTHER" id="PTHR40703:SF1">
    <property type="entry name" value="TRNA (PSEUDOURIDINE(54)-N(1))-METHYLTRANSFERASE"/>
    <property type="match status" value="1"/>
</dbReference>
<dbReference type="Pfam" id="PF04013">
    <property type="entry name" value="Methyltrn_RNA_2"/>
    <property type="match status" value="1"/>
</dbReference>
<dbReference type="SUPFAM" id="SSF75217">
    <property type="entry name" value="alpha/beta knot"/>
    <property type="match status" value="1"/>
</dbReference>
<comment type="function">
    <text evidence="1">Specifically catalyzes the N1-methylation of pseudouridine at position 54 (Psi54) in tRNAs.</text>
</comment>
<comment type="catalytic activity">
    <reaction evidence="1">
        <text>pseudouridine(54) in tRNA + S-adenosyl-L-methionine = N(1)-methylpseudouridine(54) in tRNA + S-adenosyl-L-homocysteine + H(+)</text>
        <dbReference type="Rhea" id="RHEA:55292"/>
        <dbReference type="Rhea" id="RHEA-COMP:14140"/>
        <dbReference type="Rhea" id="RHEA-COMP:14141"/>
        <dbReference type="ChEBI" id="CHEBI:15378"/>
        <dbReference type="ChEBI" id="CHEBI:57856"/>
        <dbReference type="ChEBI" id="CHEBI:59789"/>
        <dbReference type="ChEBI" id="CHEBI:65314"/>
        <dbReference type="ChEBI" id="CHEBI:74890"/>
        <dbReference type="EC" id="2.1.1.257"/>
    </reaction>
</comment>
<comment type="subunit">
    <text evidence="1">Homodimer.</text>
</comment>
<comment type="subcellular location">
    <subcellularLocation>
        <location evidence="1">Cytoplasm</location>
    </subcellularLocation>
</comment>
<comment type="similarity">
    <text evidence="1">Belongs to the methyltransferase superfamily. TrmY family.</text>
</comment>
<sequence length="198" mass="21504">MRQFIVIGHDVPTDPDAVSLADLPGAGRLDVLCRCLNSAFFLSHDLRDNVRVWLVVGDEYAIRFEGSELRRLNPDERSTAALVRGALAAREKAIGSMAANPSPGVYIRTQSLSGLLESVADDGPLVTLHEDGQPVVDIDPSAEPTFVLSDHHSFDDAETALLAAHADRRVSLGPEPLHADHAITVAHNYLDTDGYNRY</sequence>
<organism>
    <name type="scientific">Natronomonas pharaonis (strain ATCC 35678 / DSM 2160 / CIP 103997 / JCM 8858 / NBRC 14720 / NCIMB 2260 / Gabara)</name>
    <name type="common">Halobacterium pharaonis</name>
    <dbReference type="NCBI Taxonomy" id="348780"/>
    <lineage>
        <taxon>Archaea</taxon>
        <taxon>Methanobacteriati</taxon>
        <taxon>Methanobacteriota</taxon>
        <taxon>Stenosarchaea group</taxon>
        <taxon>Halobacteria</taxon>
        <taxon>Halobacteriales</taxon>
        <taxon>Haloarculaceae</taxon>
        <taxon>Natronomonas</taxon>
    </lineage>
</organism>